<accession>Q2FQM1</accession>
<feature type="chain" id="PRO_0000241303" description="Aspartyl/glutamyl-tRNA(Asn/Gln) amidotransferase subunit B">
    <location>
        <begin position="1"/>
        <end position="474"/>
    </location>
</feature>
<dbReference type="EC" id="6.3.5.-" evidence="1"/>
<dbReference type="EMBL" id="CP000254">
    <property type="protein sequence ID" value="ABD40762.1"/>
    <property type="molecule type" value="Genomic_DNA"/>
</dbReference>
<dbReference type="RefSeq" id="WP_011448041.1">
    <property type="nucleotide sequence ID" value="NC_007796.1"/>
</dbReference>
<dbReference type="SMR" id="Q2FQM1"/>
<dbReference type="FunCoup" id="Q2FQM1">
    <property type="interactions" value="143"/>
</dbReference>
<dbReference type="STRING" id="323259.Mhun_1012"/>
<dbReference type="EnsemblBacteria" id="ABD40762">
    <property type="protein sequence ID" value="ABD40762"/>
    <property type="gene ID" value="Mhun_1012"/>
</dbReference>
<dbReference type="GeneID" id="3924780"/>
<dbReference type="KEGG" id="mhu:Mhun_1012"/>
<dbReference type="eggNOG" id="arCOG01718">
    <property type="taxonomic scope" value="Archaea"/>
</dbReference>
<dbReference type="HOGENOM" id="CLU_019240_0_0_2"/>
<dbReference type="InParanoid" id="Q2FQM1"/>
<dbReference type="OrthoDB" id="52755at2157"/>
<dbReference type="Proteomes" id="UP000001941">
    <property type="component" value="Chromosome"/>
</dbReference>
<dbReference type="GO" id="GO:0050566">
    <property type="term" value="F:asparaginyl-tRNA synthase (glutamine-hydrolyzing) activity"/>
    <property type="evidence" value="ECO:0007669"/>
    <property type="project" value="RHEA"/>
</dbReference>
<dbReference type="GO" id="GO:0005524">
    <property type="term" value="F:ATP binding"/>
    <property type="evidence" value="ECO:0007669"/>
    <property type="project" value="UniProtKB-KW"/>
</dbReference>
<dbReference type="GO" id="GO:0050567">
    <property type="term" value="F:glutaminyl-tRNA synthase (glutamine-hydrolyzing) activity"/>
    <property type="evidence" value="ECO:0007669"/>
    <property type="project" value="UniProtKB-UniRule"/>
</dbReference>
<dbReference type="GO" id="GO:0070681">
    <property type="term" value="P:glutaminyl-tRNAGln biosynthesis via transamidation"/>
    <property type="evidence" value="ECO:0007669"/>
    <property type="project" value="TreeGrafter"/>
</dbReference>
<dbReference type="GO" id="GO:0006412">
    <property type="term" value="P:translation"/>
    <property type="evidence" value="ECO:0007669"/>
    <property type="project" value="UniProtKB-UniRule"/>
</dbReference>
<dbReference type="FunFam" id="1.10.10.410:FF:000001">
    <property type="entry name" value="Aspartyl/glutamyl-tRNA(Asn/Gln) amidotransferase subunit B"/>
    <property type="match status" value="1"/>
</dbReference>
<dbReference type="Gene3D" id="1.10.10.410">
    <property type="match status" value="1"/>
</dbReference>
<dbReference type="Gene3D" id="1.10.150.380">
    <property type="entry name" value="GatB domain, N-terminal subdomain"/>
    <property type="match status" value="1"/>
</dbReference>
<dbReference type="HAMAP" id="MF_00121">
    <property type="entry name" value="GatB"/>
    <property type="match status" value="1"/>
</dbReference>
<dbReference type="InterPro" id="IPR017959">
    <property type="entry name" value="Asn/Gln-tRNA_amidoTrfase_suB/E"/>
</dbReference>
<dbReference type="InterPro" id="IPR006075">
    <property type="entry name" value="Asn/Gln-tRNA_Trfase_suB/E_cat"/>
</dbReference>
<dbReference type="InterPro" id="IPR018027">
    <property type="entry name" value="Asn/Gln_amidotransferase"/>
</dbReference>
<dbReference type="InterPro" id="IPR003789">
    <property type="entry name" value="Asn/Gln_tRNA_amidoTrase-B-like"/>
</dbReference>
<dbReference type="InterPro" id="IPR004413">
    <property type="entry name" value="GatB"/>
</dbReference>
<dbReference type="InterPro" id="IPR042114">
    <property type="entry name" value="GatB_C_1"/>
</dbReference>
<dbReference type="InterPro" id="IPR023168">
    <property type="entry name" value="GatB_Yqey_C_2"/>
</dbReference>
<dbReference type="InterPro" id="IPR017958">
    <property type="entry name" value="Gln-tRNA_amidoTrfase_suB_CS"/>
</dbReference>
<dbReference type="InterPro" id="IPR014746">
    <property type="entry name" value="Gln_synth/guanido_kin_cat_dom"/>
</dbReference>
<dbReference type="NCBIfam" id="TIGR00133">
    <property type="entry name" value="gatB"/>
    <property type="match status" value="1"/>
</dbReference>
<dbReference type="NCBIfam" id="NF004012">
    <property type="entry name" value="PRK05477.1-2"/>
    <property type="match status" value="1"/>
</dbReference>
<dbReference type="NCBIfam" id="NF004014">
    <property type="entry name" value="PRK05477.1-4"/>
    <property type="match status" value="1"/>
</dbReference>
<dbReference type="PANTHER" id="PTHR11659">
    <property type="entry name" value="GLUTAMYL-TRNA GLN AMIDOTRANSFERASE SUBUNIT B MITOCHONDRIAL AND PROKARYOTIC PET112-RELATED"/>
    <property type="match status" value="1"/>
</dbReference>
<dbReference type="PANTHER" id="PTHR11659:SF0">
    <property type="entry name" value="GLUTAMYL-TRNA(GLN) AMIDOTRANSFERASE SUBUNIT B, MITOCHONDRIAL"/>
    <property type="match status" value="1"/>
</dbReference>
<dbReference type="Pfam" id="PF02934">
    <property type="entry name" value="GatB_N"/>
    <property type="match status" value="1"/>
</dbReference>
<dbReference type="Pfam" id="PF02637">
    <property type="entry name" value="GatB_Yqey"/>
    <property type="match status" value="1"/>
</dbReference>
<dbReference type="SMART" id="SM00845">
    <property type="entry name" value="GatB_Yqey"/>
    <property type="match status" value="1"/>
</dbReference>
<dbReference type="SUPFAM" id="SSF89095">
    <property type="entry name" value="GatB/YqeY motif"/>
    <property type="match status" value="1"/>
</dbReference>
<dbReference type="SUPFAM" id="SSF55931">
    <property type="entry name" value="Glutamine synthetase/guanido kinase"/>
    <property type="match status" value="1"/>
</dbReference>
<dbReference type="PROSITE" id="PS01234">
    <property type="entry name" value="GATB"/>
    <property type="match status" value="1"/>
</dbReference>
<protein>
    <recommendedName>
        <fullName evidence="1">Aspartyl/glutamyl-tRNA(Asn/Gln) amidotransferase subunit B</fullName>
        <shortName evidence="1">Asp/Glu-ADT subunit B</shortName>
        <ecNumber evidence="1">6.3.5.-</ecNumber>
    </recommendedName>
</protein>
<evidence type="ECO:0000255" key="1">
    <source>
        <dbReference type="HAMAP-Rule" id="MF_00121"/>
    </source>
</evidence>
<comment type="function">
    <text evidence="1">Allows the formation of correctly charged Asn-tRNA(Asn) or Gln-tRNA(Gln) through the transamidation of misacylated Asp-tRNA(Asn) or Glu-tRNA(Gln) in organisms which lack either or both of asparaginyl-tRNA or glutaminyl-tRNA synthetases. The reaction takes place in the presence of glutamine and ATP through an activated phospho-Asp-tRNA(Asn) or phospho-Glu-tRNA(Gln).</text>
</comment>
<comment type="catalytic activity">
    <reaction evidence="1">
        <text>L-glutamyl-tRNA(Gln) + L-glutamine + ATP + H2O = L-glutaminyl-tRNA(Gln) + L-glutamate + ADP + phosphate + H(+)</text>
        <dbReference type="Rhea" id="RHEA:17521"/>
        <dbReference type="Rhea" id="RHEA-COMP:9681"/>
        <dbReference type="Rhea" id="RHEA-COMP:9684"/>
        <dbReference type="ChEBI" id="CHEBI:15377"/>
        <dbReference type="ChEBI" id="CHEBI:15378"/>
        <dbReference type="ChEBI" id="CHEBI:29985"/>
        <dbReference type="ChEBI" id="CHEBI:30616"/>
        <dbReference type="ChEBI" id="CHEBI:43474"/>
        <dbReference type="ChEBI" id="CHEBI:58359"/>
        <dbReference type="ChEBI" id="CHEBI:78520"/>
        <dbReference type="ChEBI" id="CHEBI:78521"/>
        <dbReference type="ChEBI" id="CHEBI:456216"/>
    </reaction>
</comment>
<comment type="catalytic activity">
    <reaction evidence="1">
        <text>L-aspartyl-tRNA(Asn) + L-glutamine + ATP + H2O = L-asparaginyl-tRNA(Asn) + L-glutamate + ADP + phosphate + 2 H(+)</text>
        <dbReference type="Rhea" id="RHEA:14513"/>
        <dbReference type="Rhea" id="RHEA-COMP:9674"/>
        <dbReference type="Rhea" id="RHEA-COMP:9677"/>
        <dbReference type="ChEBI" id="CHEBI:15377"/>
        <dbReference type="ChEBI" id="CHEBI:15378"/>
        <dbReference type="ChEBI" id="CHEBI:29985"/>
        <dbReference type="ChEBI" id="CHEBI:30616"/>
        <dbReference type="ChEBI" id="CHEBI:43474"/>
        <dbReference type="ChEBI" id="CHEBI:58359"/>
        <dbReference type="ChEBI" id="CHEBI:78515"/>
        <dbReference type="ChEBI" id="CHEBI:78516"/>
        <dbReference type="ChEBI" id="CHEBI:456216"/>
    </reaction>
</comment>
<comment type="subunit">
    <text evidence="1">Heterotrimer of A, B and C subunits.</text>
</comment>
<comment type="similarity">
    <text evidence="1">Belongs to the GatB/GatE family. GatB subfamily.</text>
</comment>
<organism>
    <name type="scientific">Methanospirillum hungatei JF-1 (strain ATCC 27890 / DSM 864 / NBRC 100397 / JF-1)</name>
    <dbReference type="NCBI Taxonomy" id="323259"/>
    <lineage>
        <taxon>Archaea</taxon>
        <taxon>Methanobacteriati</taxon>
        <taxon>Methanobacteriota</taxon>
        <taxon>Stenosarchaea group</taxon>
        <taxon>Methanomicrobia</taxon>
        <taxon>Methanomicrobiales</taxon>
        <taxon>Methanospirillaceae</taxon>
        <taxon>Methanospirillum</taxon>
    </lineage>
</organism>
<sequence length="474" mass="53721">MEDLETIIGLEIHCQLNTKSKMFCSCSTDFRDNEPNTHTCPVCLGLPGSMPMVNKRAIEFALKVGKALNCTIRDESEFSRKNYFYPDLNKAYQITQYDKPLAEWGKLLIDGDNGEKEVRITRIHLEEDPGRSVHMGTTDRGKYTLVDYNRAGIPLIEIVTEPDLRSPKEARKFLNKLRATLEYLNVFDSEKEGSLRVDANISLKGSERVEVKNISSYKGVEKALTFEVTRQRNLLRRGQIVTRETRHFVEARGVTTSSRSKEEENDYRYFPEPDLLPLRVASWVDAIELPELPDARRERFISQYGVSPEHAKTLTGGLKLAEFYETVASEDPALAATWTADYLLGELNYRDFSIDAMPSDLFRELLTLIKSDTITDKSAVEILRLILDAVKDGKKPERPQEIVSRLGLAKTSGDQVTAMIQEVIAEQQAAIDDYYAGKMQALNFLVGQVMKKCRGRADPGHLNTLLKEILDKKV</sequence>
<reference key="1">
    <citation type="journal article" date="2016" name="Stand. Genomic Sci.">
        <title>Complete genome sequence of Methanospirillum hungatei type strain JF1.</title>
        <authorList>
            <person name="Gunsalus R.P."/>
            <person name="Cook L.E."/>
            <person name="Crable B."/>
            <person name="Rohlin L."/>
            <person name="McDonald E."/>
            <person name="Mouttaki H."/>
            <person name="Sieber J.R."/>
            <person name="Poweleit N."/>
            <person name="Zhou H."/>
            <person name="Lapidus A.L."/>
            <person name="Daligault H.E."/>
            <person name="Land M."/>
            <person name="Gilna P."/>
            <person name="Ivanova N."/>
            <person name="Kyrpides N."/>
            <person name="Culley D.E."/>
            <person name="McInerney M.J."/>
        </authorList>
    </citation>
    <scope>NUCLEOTIDE SEQUENCE [LARGE SCALE GENOMIC DNA]</scope>
    <source>
        <strain>ATCC 27890 / DSM 864 / NBRC 100397 / JF-1</strain>
    </source>
</reference>
<gene>
    <name evidence="1" type="primary">gatB</name>
    <name type="ordered locus">Mhun_1012</name>
</gene>
<keyword id="KW-0067">ATP-binding</keyword>
<keyword id="KW-0436">Ligase</keyword>
<keyword id="KW-0547">Nucleotide-binding</keyword>
<keyword id="KW-0648">Protein biosynthesis</keyword>
<keyword id="KW-1185">Reference proteome</keyword>
<proteinExistence type="inferred from homology"/>
<name>GATB_METHJ</name>